<protein>
    <recommendedName>
        <fullName evidence="1">Dihydroxy-acid dehydratase</fullName>
        <shortName evidence="1">DAD</shortName>
        <ecNumber evidence="1">4.2.1.9</ecNumber>
    </recommendedName>
</protein>
<feature type="chain" id="PRO_1000001083" description="Dihydroxy-acid dehydratase">
    <location>
        <begin position="1"/>
        <end position="616"/>
    </location>
</feature>
<feature type="active site" description="Proton acceptor" evidence="1">
    <location>
        <position position="517"/>
    </location>
</feature>
<feature type="binding site" evidence="1">
    <location>
        <position position="81"/>
    </location>
    <ligand>
        <name>Mg(2+)</name>
        <dbReference type="ChEBI" id="CHEBI:18420"/>
    </ligand>
</feature>
<feature type="binding site" evidence="1">
    <location>
        <position position="122"/>
    </location>
    <ligand>
        <name>[2Fe-2S] cluster</name>
        <dbReference type="ChEBI" id="CHEBI:190135"/>
    </ligand>
</feature>
<feature type="binding site" evidence="1">
    <location>
        <position position="123"/>
    </location>
    <ligand>
        <name>Mg(2+)</name>
        <dbReference type="ChEBI" id="CHEBI:18420"/>
    </ligand>
</feature>
<feature type="binding site" description="via carbamate group" evidence="1">
    <location>
        <position position="124"/>
    </location>
    <ligand>
        <name>Mg(2+)</name>
        <dbReference type="ChEBI" id="CHEBI:18420"/>
    </ligand>
</feature>
<feature type="binding site" evidence="1">
    <location>
        <position position="195"/>
    </location>
    <ligand>
        <name>[2Fe-2S] cluster</name>
        <dbReference type="ChEBI" id="CHEBI:190135"/>
    </ligand>
</feature>
<feature type="binding site" evidence="1">
    <location>
        <position position="491"/>
    </location>
    <ligand>
        <name>Mg(2+)</name>
        <dbReference type="ChEBI" id="CHEBI:18420"/>
    </ligand>
</feature>
<feature type="modified residue" description="N6-carboxylysine" evidence="1">
    <location>
        <position position="124"/>
    </location>
</feature>
<comment type="function">
    <text evidence="1">Functions in the biosynthesis of branched-chain amino acids. Catalyzes the dehydration of (2R,3R)-2,3-dihydroxy-3-methylpentanoate (2,3-dihydroxy-3-methylvalerate) into 2-oxo-3-methylpentanoate (2-oxo-3-methylvalerate) and of (2R)-2,3-dihydroxy-3-methylbutanoate (2,3-dihydroxyisovalerate) into 2-oxo-3-methylbutanoate (2-oxoisovalerate), the penultimate precursor to L-isoleucine and L-valine, respectively.</text>
</comment>
<comment type="catalytic activity">
    <reaction evidence="1">
        <text>(2R)-2,3-dihydroxy-3-methylbutanoate = 3-methyl-2-oxobutanoate + H2O</text>
        <dbReference type="Rhea" id="RHEA:24809"/>
        <dbReference type="ChEBI" id="CHEBI:11851"/>
        <dbReference type="ChEBI" id="CHEBI:15377"/>
        <dbReference type="ChEBI" id="CHEBI:49072"/>
        <dbReference type="EC" id="4.2.1.9"/>
    </reaction>
    <physiologicalReaction direction="left-to-right" evidence="1">
        <dbReference type="Rhea" id="RHEA:24810"/>
    </physiologicalReaction>
</comment>
<comment type="catalytic activity">
    <reaction evidence="1">
        <text>(2R,3R)-2,3-dihydroxy-3-methylpentanoate = (S)-3-methyl-2-oxopentanoate + H2O</text>
        <dbReference type="Rhea" id="RHEA:27694"/>
        <dbReference type="ChEBI" id="CHEBI:15377"/>
        <dbReference type="ChEBI" id="CHEBI:35146"/>
        <dbReference type="ChEBI" id="CHEBI:49258"/>
        <dbReference type="EC" id="4.2.1.9"/>
    </reaction>
    <physiologicalReaction direction="left-to-right" evidence="1">
        <dbReference type="Rhea" id="RHEA:27695"/>
    </physiologicalReaction>
</comment>
<comment type="cofactor">
    <cofactor evidence="1">
        <name>[2Fe-2S] cluster</name>
        <dbReference type="ChEBI" id="CHEBI:190135"/>
    </cofactor>
    <text evidence="1">Binds 1 [2Fe-2S] cluster per subunit. This cluster acts as a Lewis acid cofactor.</text>
</comment>
<comment type="cofactor">
    <cofactor evidence="1">
        <name>Mg(2+)</name>
        <dbReference type="ChEBI" id="CHEBI:18420"/>
    </cofactor>
</comment>
<comment type="pathway">
    <text evidence="1">Amino-acid biosynthesis; L-isoleucine biosynthesis; L-isoleucine from 2-oxobutanoate: step 3/4.</text>
</comment>
<comment type="pathway">
    <text evidence="1">Amino-acid biosynthesis; L-valine biosynthesis; L-valine from pyruvate: step 3/4.</text>
</comment>
<comment type="subunit">
    <text evidence="1">Homodimer.</text>
</comment>
<comment type="similarity">
    <text evidence="1">Belongs to the IlvD/Edd family.</text>
</comment>
<reference key="1">
    <citation type="journal article" date="2006" name="PLoS Genet.">
        <title>The complete genome sequence and comparative genome analysis of the high pathogenicity Yersinia enterocolitica strain 8081.</title>
        <authorList>
            <person name="Thomson N.R."/>
            <person name="Howard S."/>
            <person name="Wren B.W."/>
            <person name="Holden M.T.G."/>
            <person name="Crossman L."/>
            <person name="Challis G.L."/>
            <person name="Churcher C."/>
            <person name="Mungall K."/>
            <person name="Brooks K."/>
            <person name="Chillingworth T."/>
            <person name="Feltwell T."/>
            <person name="Abdellah Z."/>
            <person name="Hauser H."/>
            <person name="Jagels K."/>
            <person name="Maddison M."/>
            <person name="Moule S."/>
            <person name="Sanders M."/>
            <person name="Whitehead S."/>
            <person name="Quail M.A."/>
            <person name="Dougan G."/>
            <person name="Parkhill J."/>
            <person name="Prentice M.B."/>
        </authorList>
    </citation>
    <scope>NUCLEOTIDE SEQUENCE [LARGE SCALE GENOMIC DNA]</scope>
    <source>
        <strain>NCTC 13174 / 8081</strain>
    </source>
</reference>
<gene>
    <name evidence="1" type="primary">ilvD</name>
    <name type="ordered locus">YE0151</name>
</gene>
<organism>
    <name type="scientific">Yersinia enterocolitica serotype O:8 / biotype 1B (strain NCTC 13174 / 8081)</name>
    <dbReference type="NCBI Taxonomy" id="393305"/>
    <lineage>
        <taxon>Bacteria</taxon>
        <taxon>Pseudomonadati</taxon>
        <taxon>Pseudomonadota</taxon>
        <taxon>Gammaproteobacteria</taxon>
        <taxon>Enterobacterales</taxon>
        <taxon>Yersiniaceae</taxon>
        <taxon>Yersinia</taxon>
    </lineage>
</organism>
<keyword id="KW-0001">2Fe-2S</keyword>
<keyword id="KW-0028">Amino-acid biosynthesis</keyword>
<keyword id="KW-0100">Branched-chain amino acid biosynthesis</keyword>
<keyword id="KW-0408">Iron</keyword>
<keyword id="KW-0411">Iron-sulfur</keyword>
<keyword id="KW-0456">Lyase</keyword>
<keyword id="KW-0460">Magnesium</keyword>
<keyword id="KW-0479">Metal-binding</keyword>
<proteinExistence type="inferred from homology"/>
<dbReference type="EC" id="4.2.1.9" evidence="1"/>
<dbReference type="EMBL" id="AM286415">
    <property type="protein sequence ID" value="CAL10291.1"/>
    <property type="molecule type" value="Genomic_DNA"/>
</dbReference>
<dbReference type="RefSeq" id="WP_005176087.1">
    <property type="nucleotide sequence ID" value="NC_008800.1"/>
</dbReference>
<dbReference type="RefSeq" id="YP_001004543.1">
    <property type="nucleotide sequence ID" value="NC_008800.1"/>
</dbReference>
<dbReference type="SMR" id="A1JI53"/>
<dbReference type="GeneID" id="93969185"/>
<dbReference type="KEGG" id="yen:YE0151"/>
<dbReference type="PATRIC" id="fig|393305.7.peg.243"/>
<dbReference type="eggNOG" id="COG0129">
    <property type="taxonomic scope" value="Bacteria"/>
</dbReference>
<dbReference type="HOGENOM" id="CLU_014271_4_2_6"/>
<dbReference type="OrthoDB" id="9807077at2"/>
<dbReference type="UniPathway" id="UPA00047">
    <property type="reaction ID" value="UER00057"/>
</dbReference>
<dbReference type="UniPathway" id="UPA00049">
    <property type="reaction ID" value="UER00061"/>
</dbReference>
<dbReference type="Proteomes" id="UP000000642">
    <property type="component" value="Chromosome"/>
</dbReference>
<dbReference type="GO" id="GO:0005829">
    <property type="term" value="C:cytosol"/>
    <property type="evidence" value="ECO:0007669"/>
    <property type="project" value="TreeGrafter"/>
</dbReference>
<dbReference type="GO" id="GO:0051537">
    <property type="term" value="F:2 iron, 2 sulfur cluster binding"/>
    <property type="evidence" value="ECO:0007669"/>
    <property type="project" value="UniProtKB-UniRule"/>
</dbReference>
<dbReference type="GO" id="GO:0004160">
    <property type="term" value="F:dihydroxy-acid dehydratase activity"/>
    <property type="evidence" value="ECO:0007669"/>
    <property type="project" value="UniProtKB-UniRule"/>
</dbReference>
<dbReference type="GO" id="GO:0000287">
    <property type="term" value="F:magnesium ion binding"/>
    <property type="evidence" value="ECO:0007669"/>
    <property type="project" value="UniProtKB-UniRule"/>
</dbReference>
<dbReference type="GO" id="GO:0009097">
    <property type="term" value="P:isoleucine biosynthetic process"/>
    <property type="evidence" value="ECO:0007669"/>
    <property type="project" value="UniProtKB-UniRule"/>
</dbReference>
<dbReference type="GO" id="GO:0009099">
    <property type="term" value="P:L-valine biosynthetic process"/>
    <property type="evidence" value="ECO:0007669"/>
    <property type="project" value="UniProtKB-UniRule"/>
</dbReference>
<dbReference type="FunFam" id="3.50.30.80:FF:000001">
    <property type="entry name" value="Dihydroxy-acid dehydratase"/>
    <property type="match status" value="1"/>
</dbReference>
<dbReference type="Gene3D" id="3.50.30.80">
    <property type="entry name" value="IlvD/EDD C-terminal domain-like"/>
    <property type="match status" value="1"/>
</dbReference>
<dbReference type="HAMAP" id="MF_00012">
    <property type="entry name" value="IlvD"/>
    <property type="match status" value="1"/>
</dbReference>
<dbReference type="InterPro" id="IPR042096">
    <property type="entry name" value="Dihydro-acid_dehy_C"/>
</dbReference>
<dbReference type="InterPro" id="IPR004404">
    <property type="entry name" value="DihydroxyA_deHydtase"/>
</dbReference>
<dbReference type="InterPro" id="IPR020558">
    <property type="entry name" value="DiOHA_6PGluconate_deHydtase_CS"/>
</dbReference>
<dbReference type="InterPro" id="IPR056740">
    <property type="entry name" value="ILV_EDD_C"/>
</dbReference>
<dbReference type="InterPro" id="IPR000581">
    <property type="entry name" value="ILV_EDD_N"/>
</dbReference>
<dbReference type="InterPro" id="IPR037237">
    <property type="entry name" value="IlvD/EDD_N"/>
</dbReference>
<dbReference type="NCBIfam" id="TIGR00110">
    <property type="entry name" value="ilvD"/>
    <property type="match status" value="1"/>
</dbReference>
<dbReference type="NCBIfam" id="NF009103">
    <property type="entry name" value="PRK12448.1"/>
    <property type="match status" value="1"/>
</dbReference>
<dbReference type="PANTHER" id="PTHR43661">
    <property type="entry name" value="D-XYLONATE DEHYDRATASE"/>
    <property type="match status" value="1"/>
</dbReference>
<dbReference type="PANTHER" id="PTHR43661:SF3">
    <property type="entry name" value="D-XYLONATE DEHYDRATASE YAGF-RELATED"/>
    <property type="match status" value="1"/>
</dbReference>
<dbReference type="Pfam" id="PF24877">
    <property type="entry name" value="ILV_EDD_C"/>
    <property type="match status" value="1"/>
</dbReference>
<dbReference type="Pfam" id="PF00920">
    <property type="entry name" value="ILVD_EDD_N"/>
    <property type="match status" value="1"/>
</dbReference>
<dbReference type="SUPFAM" id="SSF143975">
    <property type="entry name" value="IlvD/EDD N-terminal domain-like"/>
    <property type="match status" value="1"/>
</dbReference>
<dbReference type="SUPFAM" id="SSF52016">
    <property type="entry name" value="LeuD/IlvD-like"/>
    <property type="match status" value="1"/>
</dbReference>
<dbReference type="PROSITE" id="PS00886">
    <property type="entry name" value="ILVD_EDD_1"/>
    <property type="match status" value="1"/>
</dbReference>
<dbReference type="PROSITE" id="PS00887">
    <property type="entry name" value="ILVD_EDD_2"/>
    <property type="match status" value="1"/>
</dbReference>
<evidence type="ECO:0000255" key="1">
    <source>
        <dbReference type="HAMAP-Rule" id="MF_00012"/>
    </source>
</evidence>
<sequence length="616" mass="65555">MPKYRSHTTTHGRNMAGARALWRATGMTDDDFGKPIIAVVNSFTQFVPGHVHLRDLGKLVAEQIEASGGVAKEFNTIAVDDGIAMGHGGMLYSLPSRELIADSVEYMVNAHCADAMVCISNCDKITPGMLMASLRLNIPVIFVSGGPMEAGKTKLSDKIIKLDLVDAMIQGANPNVSDADSEQIERSACPTCGSCSGMFTANSMNCLNEALGLALPGNGSLLATHADRKQLFLDAGKHIVELTKRYYEQDDISALPRSIANKAAFENAMTLDIAMGGSTNTVLHLLAAAQEGDIDFDISDIDRLSRKVPHLCKVAPSTQKYHMEDVHRAGGVVGILGELDRAGLLNREVKNVLGLNLPQTLEAYDVMLTKDEGVKQMYSAGPAGIRTTKAFSQDCRFPSLDTDRQEGCIRTREHAYSQDGGLAVLYGNLSENGSIVKTAGVDKDSLTFRGPAKVYESQDDAVAAILGGKVVAGDVVVIRYEGPKGGPGMQEMLYPTTYLKSMGLGKSCALLTDGRFSGGTSGLSIGHASPEAASGGLIALVQDGDIIDIDIPNRAMKLDVSDAELAARREAELARGDAAWTPKARERQVSYALRAYALLATSADKGAVRDKSKLGG</sequence>
<name>ILVD_YERE8</name>
<accession>A1JI53</accession>